<accession>B0B876</accession>
<dbReference type="EC" id="3.1.21.10" evidence="1"/>
<dbReference type="EMBL" id="AM884176">
    <property type="protein sequence ID" value="CAP04202.1"/>
    <property type="molecule type" value="Genomic_DNA"/>
</dbReference>
<dbReference type="RefSeq" id="WP_009871866.1">
    <property type="nucleotide sequence ID" value="NC_010287.1"/>
</dbReference>
<dbReference type="RefSeq" id="YP_001654835.1">
    <property type="nucleotide sequence ID" value="NC_010287.1"/>
</dbReference>
<dbReference type="SMR" id="B0B876"/>
<dbReference type="KEGG" id="ctb:CTL0764"/>
<dbReference type="PATRIC" id="fig|471472.4.peg.820"/>
<dbReference type="HOGENOM" id="CLU_091257_3_0_0"/>
<dbReference type="Proteomes" id="UP001154402">
    <property type="component" value="Chromosome"/>
</dbReference>
<dbReference type="GO" id="GO:0005737">
    <property type="term" value="C:cytoplasm"/>
    <property type="evidence" value="ECO:0007669"/>
    <property type="project" value="UniProtKB-SubCell"/>
</dbReference>
<dbReference type="GO" id="GO:0048476">
    <property type="term" value="C:Holliday junction resolvase complex"/>
    <property type="evidence" value="ECO:0007669"/>
    <property type="project" value="UniProtKB-UniRule"/>
</dbReference>
<dbReference type="GO" id="GO:0008821">
    <property type="term" value="F:crossover junction DNA endonuclease activity"/>
    <property type="evidence" value="ECO:0007669"/>
    <property type="project" value="UniProtKB-UniRule"/>
</dbReference>
<dbReference type="GO" id="GO:0003677">
    <property type="term" value="F:DNA binding"/>
    <property type="evidence" value="ECO:0007669"/>
    <property type="project" value="UniProtKB-KW"/>
</dbReference>
<dbReference type="GO" id="GO:0000287">
    <property type="term" value="F:magnesium ion binding"/>
    <property type="evidence" value="ECO:0007669"/>
    <property type="project" value="UniProtKB-UniRule"/>
</dbReference>
<dbReference type="GO" id="GO:0006310">
    <property type="term" value="P:DNA recombination"/>
    <property type="evidence" value="ECO:0007669"/>
    <property type="project" value="UniProtKB-UniRule"/>
</dbReference>
<dbReference type="GO" id="GO:0006281">
    <property type="term" value="P:DNA repair"/>
    <property type="evidence" value="ECO:0007669"/>
    <property type="project" value="UniProtKB-UniRule"/>
</dbReference>
<dbReference type="CDD" id="cd16962">
    <property type="entry name" value="RuvC"/>
    <property type="match status" value="1"/>
</dbReference>
<dbReference type="FunFam" id="3.30.420.10:FF:000002">
    <property type="entry name" value="Crossover junction endodeoxyribonuclease RuvC"/>
    <property type="match status" value="1"/>
</dbReference>
<dbReference type="Gene3D" id="3.30.420.10">
    <property type="entry name" value="Ribonuclease H-like superfamily/Ribonuclease H"/>
    <property type="match status" value="1"/>
</dbReference>
<dbReference type="HAMAP" id="MF_00034">
    <property type="entry name" value="RuvC"/>
    <property type="match status" value="1"/>
</dbReference>
<dbReference type="InterPro" id="IPR012337">
    <property type="entry name" value="RNaseH-like_sf"/>
</dbReference>
<dbReference type="InterPro" id="IPR036397">
    <property type="entry name" value="RNaseH_sf"/>
</dbReference>
<dbReference type="InterPro" id="IPR020563">
    <property type="entry name" value="X-over_junc_endoDNase_Mg_BS"/>
</dbReference>
<dbReference type="InterPro" id="IPR002176">
    <property type="entry name" value="X-over_junc_endoDNase_RuvC"/>
</dbReference>
<dbReference type="NCBIfam" id="TIGR00228">
    <property type="entry name" value="ruvC"/>
    <property type="match status" value="1"/>
</dbReference>
<dbReference type="PANTHER" id="PTHR30194">
    <property type="entry name" value="CROSSOVER JUNCTION ENDODEOXYRIBONUCLEASE RUVC"/>
    <property type="match status" value="1"/>
</dbReference>
<dbReference type="PANTHER" id="PTHR30194:SF3">
    <property type="entry name" value="CROSSOVER JUNCTION ENDODEOXYRIBONUCLEASE RUVC"/>
    <property type="match status" value="1"/>
</dbReference>
<dbReference type="Pfam" id="PF02075">
    <property type="entry name" value="RuvC"/>
    <property type="match status" value="1"/>
</dbReference>
<dbReference type="PRINTS" id="PR00696">
    <property type="entry name" value="RSOLVASERUVC"/>
</dbReference>
<dbReference type="SUPFAM" id="SSF53098">
    <property type="entry name" value="Ribonuclease H-like"/>
    <property type="match status" value="1"/>
</dbReference>
<dbReference type="PROSITE" id="PS01321">
    <property type="entry name" value="RUVC"/>
    <property type="match status" value="1"/>
</dbReference>
<comment type="function">
    <text evidence="1">The RuvA-RuvB-RuvC complex processes Holliday junction (HJ) DNA during genetic recombination and DNA repair. Endonuclease that resolves HJ intermediates. Cleaves cruciform DNA by making single-stranded nicks across the HJ at symmetrical positions within the homologous arms, yielding a 5'-phosphate and a 3'-hydroxyl group; requires a central core of homology in the junction. The consensus cleavage sequence is 5'-(A/T)TT(C/G)-3'. Cleavage occurs on the 3'-side of the TT dinucleotide at the point of strand exchange. HJ branch migration catalyzed by RuvA-RuvB allows RuvC to scan DNA until it finds its consensus sequence, where it cleaves and resolves the cruciform DNA.</text>
</comment>
<comment type="catalytic activity">
    <reaction evidence="1">
        <text>Endonucleolytic cleavage at a junction such as a reciprocal single-stranded crossover between two homologous DNA duplexes (Holliday junction).</text>
        <dbReference type="EC" id="3.1.21.10"/>
    </reaction>
</comment>
<comment type="cofactor">
    <cofactor evidence="1">
        <name>Mg(2+)</name>
        <dbReference type="ChEBI" id="CHEBI:18420"/>
    </cofactor>
    <text evidence="1">Binds 2 Mg(2+) ion per subunit.</text>
</comment>
<comment type="subunit">
    <text evidence="1">Homodimer which binds Holliday junction (HJ) DNA. The HJ becomes 2-fold symmetrical on binding to RuvC with unstacked arms; it has a different conformation from HJ DNA in complex with RuvA. In the full resolvosome a probable DNA-RuvA(4)-RuvB(12)-RuvC(2) complex forms which resolves the HJ.</text>
</comment>
<comment type="subcellular location">
    <subcellularLocation>
        <location evidence="1">Cytoplasm</location>
    </subcellularLocation>
</comment>
<comment type="similarity">
    <text evidence="1">Belongs to the RuvC family.</text>
</comment>
<protein>
    <recommendedName>
        <fullName evidence="1">Crossover junction endodeoxyribonuclease RuvC</fullName>
        <ecNumber evidence="1">3.1.21.10</ecNumber>
    </recommendedName>
    <alternativeName>
        <fullName evidence="1">Holliday junction nuclease RuvC</fullName>
    </alternativeName>
    <alternativeName>
        <fullName evidence="1">Holliday junction resolvase RuvC</fullName>
    </alternativeName>
</protein>
<evidence type="ECO:0000255" key="1">
    <source>
        <dbReference type="HAMAP-Rule" id="MF_00034"/>
    </source>
</evidence>
<reference key="1">
    <citation type="journal article" date="2008" name="Genome Res.">
        <title>Chlamydia trachomatis: genome sequence analysis of lymphogranuloma venereum isolates.</title>
        <authorList>
            <person name="Thomson N.R."/>
            <person name="Holden M.T.G."/>
            <person name="Carder C."/>
            <person name="Lennard N."/>
            <person name="Lockey S.J."/>
            <person name="Marsh P."/>
            <person name="Skipp P."/>
            <person name="O'Connor C.D."/>
            <person name="Goodhead I."/>
            <person name="Norbertzcak H."/>
            <person name="Harris B."/>
            <person name="Ormond D."/>
            <person name="Rance R."/>
            <person name="Quail M.A."/>
            <person name="Parkhill J."/>
            <person name="Stephens R.S."/>
            <person name="Clarke I.N."/>
        </authorList>
    </citation>
    <scope>NUCLEOTIDE SEQUENCE [LARGE SCALE GENOMIC DNA]</scope>
    <source>
        <strain>ATCC VR-902B / DSM 19102 / 434/Bu</strain>
    </source>
</reference>
<gene>
    <name evidence="1" type="primary">ruvC</name>
    <name type="ordered locus">CTL0764</name>
</gene>
<name>RUVC_CHLT2</name>
<keyword id="KW-0963">Cytoplasm</keyword>
<keyword id="KW-0227">DNA damage</keyword>
<keyword id="KW-0233">DNA recombination</keyword>
<keyword id="KW-0234">DNA repair</keyword>
<keyword id="KW-0238">DNA-binding</keyword>
<keyword id="KW-0255">Endonuclease</keyword>
<keyword id="KW-0378">Hydrolase</keyword>
<keyword id="KW-0460">Magnesium</keyword>
<keyword id="KW-0479">Metal-binding</keyword>
<keyword id="KW-0540">Nuclease</keyword>
<organism>
    <name type="scientific">Chlamydia trachomatis serovar L2 (strain ATCC VR-902B / DSM 19102 / 434/Bu)</name>
    <dbReference type="NCBI Taxonomy" id="471472"/>
    <lineage>
        <taxon>Bacteria</taxon>
        <taxon>Pseudomonadati</taxon>
        <taxon>Chlamydiota</taxon>
        <taxon>Chlamydiia</taxon>
        <taxon>Chlamydiales</taxon>
        <taxon>Chlamydiaceae</taxon>
        <taxon>Chlamydia/Chlamydophila group</taxon>
        <taxon>Chlamydia</taxon>
    </lineage>
</organism>
<proteinExistence type="inferred from homology"/>
<feature type="chain" id="PRO_1000090514" description="Crossover junction endodeoxyribonuclease RuvC">
    <location>
        <begin position="1"/>
        <end position="170"/>
    </location>
</feature>
<feature type="active site" evidence="1">
    <location>
        <position position="9"/>
    </location>
</feature>
<feature type="active site" evidence="1">
    <location>
        <position position="70"/>
    </location>
</feature>
<feature type="active site" evidence="1">
    <location>
        <position position="145"/>
    </location>
</feature>
<feature type="binding site" evidence="1">
    <location>
        <position position="9"/>
    </location>
    <ligand>
        <name>Mg(2+)</name>
        <dbReference type="ChEBI" id="CHEBI:18420"/>
        <label>1</label>
    </ligand>
</feature>
<feature type="binding site" evidence="1">
    <location>
        <position position="70"/>
    </location>
    <ligand>
        <name>Mg(2+)</name>
        <dbReference type="ChEBI" id="CHEBI:18420"/>
        <label>2</label>
    </ligand>
</feature>
<feature type="binding site" evidence="1">
    <location>
        <position position="145"/>
    </location>
    <ligand>
        <name>Mg(2+)</name>
        <dbReference type="ChEBI" id="CHEBI:18420"/>
        <label>1</label>
    </ligand>
</feature>
<sequence length="170" mass="18715">MADLIMGIDPGTLVCGYALIKVENRYHIHPHSFGKVKLSQKLALAHRYKQLFTEISTILQQESPKAVVLETQYVHKNPQSTIKLGMARGVLLLAASLQDVPVFEYAPNTAKKAAVGKGNASKKQVQLMVSKLLRVPDLLAEDNEDIADAFALAMCHAHLAPYQDLKKTLV</sequence>